<proteinExistence type="inferred from homology"/>
<keyword id="KW-0067">ATP-binding</keyword>
<keyword id="KW-0342">GTP-binding</keyword>
<keyword id="KW-0418">Kinase</keyword>
<keyword id="KW-0547">Nucleotide-binding</keyword>
<keyword id="KW-0808">Transferase</keyword>
<reference key="1">
    <citation type="journal article" date="1997" name="J. Bacteriol.">
        <title>Increase of methicillin resistance in Staphylococcus aureus caused by deletion of a gene whose product is homologous to lytic enzymes.</title>
        <authorList>
            <person name="Fujimura T."/>
            <person name="Murakami K."/>
        </authorList>
    </citation>
    <scope>NUCLEOTIDE SEQUENCE [GENOMIC DNA]</scope>
    <source>
        <strain>SR17238</strain>
    </source>
</reference>
<comment type="function">
    <text evidence="1">In eubacteria ppGpp (guanosine 3'-diphosphate 5'-diphosphate) is a mediator of the stringent response that coordinates a variety of cellular activities in response to changes in nutritional abundance. This enzyme catalyzes the formation of pppGpp which is then hydrolyzed to form ppGpp (By similarity).</text>
</comment>
<comment type="catalytic activity">
    <reaction>
        <text>GTP + ATP = guanosine 3'-diphosphate 5'-triphosphate + AMP</text>
        <dbReference type="Rhea" id="RHEA:22088"/>
        <dbReference type="ChEBI" id="CHEBI:30616"/>
        <dbReference type="ChEBI" id="CHEBI:37565"/>
        <dbReference type="ChEBI" id="CHEBI:142410"/>
        <dbReference type="ChEBI" id="CHEBI:456215"/>
        <dbReference type="EC" id="2.7.6.5"/>
    </reaction>
</comment>
<comment type="pathway">
    <text>Purine metabolism; ppGpp biosynthesis; ppGpp from GTP: step 1/2.</text>
</comment>
<comment type="similarity">
    <text evidence="5">Belongs to the RelA/SpoT family.</text>
</comment>
<dbReference type="EC" id="2.7.6.5"/>
<dbReference type="EMBL" id="D76414">
    <property type="protein sequence ID" value="BAA23138.1"/>
    <property type="molecule type" value="Genomic_DNA"/>
</dbReference>
<dbReference type="SMR" id="P0A0F0"/>
<dbReference type="UniPathway" id="UPA00908">
    <property type="reaction ID" value="UER00884"/>
</dbReference>
<dbReference type="GO" id="GO:0005886">
    <property type="term" value="C:plasma membrane"/>
    <property type="evidence" value="ECO:0007669"/>
    <property type="project" value="TreeGrafter"/>
</dbReference>
<dbReference type="GO" id="GO:0005524">
    <property type="term" value="F:ATP binding"/>
    <property type="evidence" value="ECO:0007669"/>
    <property type="project" value="UniProtKB-KW"/>
</dbReference>
<dbReference type="GO" id="GO:0005525">
    <property type="term" value="F:GTP binding"/>
    <property type="evidence" value="ECO:0007669"/>
    <property type="project" value="UniProtKB-KW"/>
</dbReference>
<dbReference type="GO" id="GO:0008728">
    <property type="term" value="F:GTP diphosphokinase activity"/>
    <property type="evidence" value="ECO:0007669"/>
    <property type="project" value="UniProtKB-EC"/>
</dbReference>
<dbReference type="GO" id="GO:0016301">
    <property type="term" value="F:kinase activity"/>
    <property type="evidence" value="ECO:0007669"/>
    <property type="project" value="UniProtKB-KW"/>
</dbReference>
<dbReference type="GO" id="GO:0015970">
    <property type="term" value="P:guanosine tetraphosphate biosynthetic process"/>
    <property type="evidence" value="ECO:0007669"/>
    <property type="project" value="UniProtKB-UniPathway"/>
</dbReference>
<dbReference type="CDD" id="cd04876">
    <property type="entry name" value="ACT_RelA-SpoT"/>
    <property type="match status" value="1"/>
</dbReference>
<dbReference type="CDD" id="cd00077">
    <property type="entry name" value="HDc"/>
    <property type="match status" value="1"/>
</dbReference>
<dbReference type="CDD" id="cd05399">
    <property type="entry name" value="NT_Rel-Spo_like"/>
    <property type="match status" value="1"/>
</dbReference>
<dbReference type="CDD" id="cd01668">
    <property type="entry name" value="TGS_RSH"/>
    <property type="match status" value="1"/>
</dbReference>
<dbReference type="FunFam" id="3.10.20.30:FF:000002">
    <property type="entry name" value="GTP pyrophosphokinase (RelA/SpoT)"/>
    <property type="match status" value="1"/>
</dbReference>
<dbReference type="FunFam" id="1.10.3210.10:FF:000001">
    <property type="entry name" value="GTP pyrophosphokinase RelA"/>
    <property type="match status" value="1"/>
</dbReference>
<dbReference type="FunFam" id="3.30.460.10:FF:000001">
    <property type="entry name" value="GTP pyrophosphokinase RelA"/>
    <property type="match status" value="1"/>
</dbReference>
<dbReference type="Gene3D" id="3.10.20.30">
    <property type="match status" value="1"/>
</dbReference>
<dbReference type="Gene3D" id="3.30.70.260">
    <property type="match status" value="1"/>
</dbReference>
<dbReference type="Gene3D" id="3.30.460.10">
    <property type="entry name" value="Beta Polymerase, domain 2"/>
    <property type="match status" value="1"/>
</dbReference>
<dbReference type="Gene3D" id="1.10.3210.10">
    <property type="entry name" value="Hypothetical protein af1432"/>
    <property type="match status" value="1"/>
</dbReference>
<dbReference type="InterPro" id="IPR045865">
    <property type="entry name" value="ACT-like_dom_sf"/>
</dbReference>
<dbReference type="InterPro" id="IPR002912">
    <property type="entry name" value="ACT_dom"/>
</dbReference>
<dbReference type="InterPro" id="IPR012675">
    <property type="entry name" value="Beta-grasp_dom_sf"/>
</dbReference>
<dbReference type="InterPro" id="IPR003607">
    <property type="entry name" value="HD/PDEase_dom"/>
</dbReference>
<dbReference type="InterPro" id="IPR006674">
    <property type="entry name" value="HD_domain"/>
</dbReference>
<dbReference type="InterPro" id="IPR043519">
    <property type="entry name" value="NT_sf"/>
</dbReference>
<dbReference type="InterPro" id="IPR004811">
    <property type="entry name" value="RelA/Spo_fam"/>
</dbReference>
<dbReference type="InterPro" id="IPR045600">
    <property type="entry name" value="RelA/SpoT_AH_RIS"/>
</dbReference>
<dbReference type="InterPro" id="IPR007685">
    <property type="entry name" value="RelA_SpoT"/>
</dbReference>
<dbReference type="InterPro" id="IPR004095">
    <property type="entry name" value="TGS"/>
</dbReference>
<dbReference type="InterPro" id="IPR012676">
    <property type="entry name" value="TGS-like"/>
</dbReference>
<dbReference type="InterPro" id="IPR033655">
    <property type="entry name" value="TGS_RelA/SpoT"/>
</dbReference>
<dbReference type="NCBIfam" id="TIGR00691">
    <property type="entry name" value="spoT_relA"/>
    <property type="match status" value="1"/>
</dbReference>
<dbReference type="PANTHER" id="PTHR21262:SF31">
    <property type="entry name" value="GTP PYROPHOSPHOKINASE"/>
    <property type="match status" value="1"/>
</dbReference>
<dbReference type="PANTHER" id="PTHR21262">
    <property type="entry name" value="GUANOSINE-3',5'-BIS DIPHOSPHATE 3'-PYROPHOSPHOHYDROLASE"/>
    <property type="match status" value="1"/>
</dbReference>
<dbReference type="Pfam" id="PF13291">
    <property type="entry name" value="ACT_4"/>
    <property type="match status" value="1"/>
</dbReference>
<dbReference type="Pfam" id="PF13328">
    <property type="entry name" value="HD_4"/>
    <property type="match status" value="1"/>
</dbReference>
<dbReference type="Pfam" id="PF19296">
    <property type="entry name" value="RelA_AH_RIS"/>
    <property type="match status" value="1"/>
</dbReference>
<dbReference type="Pfam" id="PF04607">
    <property type="entry name" value="RelA_SpoT"/>
    <property type="match status" value="1"/>
</dbReference>
<dbReference type="Pfam" id="PF02824">
    <property type="entry name" value="TGS"/>
    <property type="match status" value="1"/>
</dbReference>
<dbReference type="SMART" id="SM00471">
    <property type="entry name" value="HDc"/>
    <property type="match status" value="1"/>
</dbReference>
<dbReference type="SMART" id="SM00954">
    <property type="entry name" value="RelA_SpoT"/>
    <property type="match status" value="1"/>
</dbReference>
<dbReference type="SUPFAM" id="SSF55021">
    <property type="entry name" value="ACT-like"/>
    <property type="match status" value="1"/>
</dbReference>
<dbReference type="SUPFAM" id="SSF109604">
    <property type="entry name" value="HD-domain/PDEase-like"/>
    <property type="match status" value="1"/>
</dbReference>
<dbReference type="SUPFAM" id="SSF81301">
    <property type="entry name" value="Nucleotidyltransferase"/>
    <property type="match status" value="1"/>
</dbReference>
<dbReference type="SUPFAM" id="SSF81271">
    <property type="entry name" value="TGS-like"/>
    <property type="match status" value="1"/>
</dbReference>
<dbReference type="PROSITE" id="PS51671">
    <property type="entry name" value="ACT"/>
    <property type="match status" value="1"/>
</dbReference>
<dbReference type="PROSITE" id="PS51831">
    <property type="entry name" value="HD"/>
    <property type="match status" value="1"/>
</dbReference>
<dbReference type="PROSITE" id="PS51880">
    <property type="entry name" value="TGS"/>
    <property type="match status" value="1"/>
</dbReference>
<feature type="chain" id="PRO_0000166559" description="GTP pyrophosphokinase">
    <location>
        <begin position="1"/>
        <end position="736"/>
    </location>
</feature>
<feature type="domain" description="HD" evidence="3">
    <location>
        <begin position="57"/>
        <end position="156"/>
    </location>
</feature>
<feature type="domain" description="TGS" evidence="4">
    <location>
        <begin position="400"/>
        <end position="461"/>
    </location>
</feature>
<feature type="domain" description="ACT" evidence="2">
    <location>
        <begin position="662"/>
        <end position="736"/>
    </location>
</feature>
<protein>
    <recommendedName>
        <fullName>GTP pyrophosphokinase</fullName>
        <ecNumber>2.7.6.5</ecNumber>
    </recommendedName>
    <alternativeName>
        <fullName>(p)ppGpp synthase</fullName>
    </alternativeName>
    <alternativeName>
        <fullName>ATP:GTP 3'-pyrophosphotransferase</fullName>
    </alternativeName>
    <alternativeName>
        <fullName>ppGpp synthase I</fullName>
    </alternativeName>
</protein>
<name>RELA_STAAU</name>
<sequence>MNGVYHIMNNEYPYSADEVLHKAKSYLSADEYEYVLKSYHIAYEAHKGQFRKNGLPYIMHPIQVAGILTEMRLDGPTIVAGFLHDVIEDTPYTFEDVKEMFNEEVARIVDGVTKLKKVKYRSKEEQQAENHRKLFIAIAKDVRVILVKLADRLHNMRTLKAMPREKQIRISRETLEIYAPLAHRLGINTIKWELEDTALRYIDNVQYFRIVNLMKKKRSEREAYIETAIDRIRTEMDRMNIEGDINGRPKHIYSIYRKMMKQKKQFDQIFDLLAIRVIVNSINDCYAILGLVHTLWKPMPGRFKDYIAMPKQNLYQSLHTTVVGPNGDPLEIQIRTFDMHEIAEHGVAAHWAYKEGKKVSEKDQTYQNKLNWLKELAEADHTSSDAQEFMETLKYDLQSDKVYAFTPASDVIELPYGAVPIDFAYAIHSEVGNKMIGAKVNGKIVPIDYILQTGDIVEIRTSKHSYGPSRDWLKIVKSSSAKGKIKSFFKKQDRSSNIEKGRMMVEVEIKEQGFRVEDILTEKNIQVVNEKYNFANEDDLFAAVGFGGVTSLQIVNKLTERQRILDKQRALNEAQEVTKSLPIKDNIITDSGVYVEGLENVLIKLSKCCNPIPGDDIVGYITKGHGIKVHRTDCPNIKNETERLINVEWVKSKDATQKYQVDLEVTAYDRNGLLNEVLQAVSSTAGNLIKVSGRSDIDKNAIINISVMVKNVNDVYRVVEKIKQLGDVYTVTRVWN</sequence>
<organism>
    <name type="scientific">Staphylococcus aureus</name>
    <dbReference type="NCBI Taxonomy" id="1280"/>
    <lineage>
        <taxon>Bacteria</taxon>
        <taxon>Bacillati</taxon>
        <taxon>Bacillota</taxon>
        <taxon>Bacilli</taxon>
        <taxon>Bacillales</taxon>
        <taxon>Staphylococcaceae</taxon>
        <taxon>Staphylococcus</taxon>
    </lineage>
</organism>
<gene>
    <name type="primary">relA</name>
    <name type="synonym">rel</name>
</gene>
<accession>P0A0F0</accession>
<accession>O32419</accession>
<evidence type="ECO:0000250" key="1"/>
<evidence type="ECO:0000255" key="2">
    <source>
        <dbReference type="PROSITE-ProRule" id="PRU01007"/>
    </source>
</evidence>
<evidence type="ECO:0000255" key="3">
    <source>
        <dbReference type="PROSITE-ProRule" id="PRU01175"/>
    </source>
</evidence>
<evidence type="ECO:0000255" key="4">
    <source>
        <dbReference type="PROSITE-ProRule" id="PRU01228"/>
    </source>
</evidence>
<evidence type="ECO:0000305" key="5"/>